<reference key="1">
    <citation type="journal article" date="2004" name="J. Bacteriol.">
        <title>The genome sequence of Mycoplasma hyopneumoniae strain 232, the agent of swine mycoplasmosis.</title>
        <authorList>
            <person name="Minion F.C."/>
            <person name="Lefkowitz E.J."/>
            <person name="Madsen M.L."/>
            <person name="Cleary B.J."/>
            <person name="Swartzell S.M."/>
            <person name="Mahairas G.G."/>
        </authorList>
    </citation>
    <scope>NUCLEOTIDE SEQUENCE [LARGE SCALE GENOMIC DNA]</scope>
    <source>
        <strain>232</strain>
    </source>
</reference>
<proteinExistence type="inferred from homology"/>
<feature type="chain" id="PRO_0000242047" description="Arginine--tRNA ligase">
    <location>
        <begin position="1"/>
        <end position="534"/>
    </location>
</feature>
<feature type="short sequence motif" description="'HIGH' region">
    <location>
        <begin position="120"/>
        <end position="130"/>
    </location>
</feature>
<evidence type="ECO:0000255" key="1">
    <source>
        <dbReference type="HAMAP-Rule" id="MF_00123"/>
    </source>
</evidence>
<dbReference type="EC" id="6.1.1.19" evidence="1"/>
<dbReference type="EMBL" id="AE017332">
    <property type="protein sequence ID" value="AAV27355.1"/>
    <property type="molecule type" value="Genomic_DNA"/>
</dbReference>
<dbReference type="RefSeq" id="WP_011205851.1">
    <property type="nucleotide sequence ID" value="NC_006360.1"/>
</dbReference>
<dbReference type="SMR" id="Q602D8"/>
<dbReference type="KEGG" id="mhy:mhp012"/>
<dbReference type="eggNOG" id="COG0018">
    <property type="taxonomic scope" value="Bacteria"/>
</dbReference>
<dbReference type="HOGENOM" id="CLU_006406_0_1_14"/>
<dbReference type="PhylomeDB" id="Q602D8"/>
<dbReference type="Proteomes" id="UP000006822">
    <property type="component" value="Chromosome"/>
</dbReference>
<dbReference type="GO" id="GO:0005737">
    <property type="term" value="C:cytoplasm"/>
    <property type="evidence" value="ECO:0007669"/>
    <property type="project" value="UniProtKB-SubCell"/>
</dbReference>
<dbReference type="GO" id="GO:0004814">
    <property type="term" value="F:arginine-tRNA ligase activity"/>
    <property type="evidence" value="ECO:0007669"/>
    <property type="project" value="UniProtKB-UniRule"/>
</dbReference>
<dbReference type="GO" id="GO:0005524">
    <property type="term" value="F:ATP binding"/>
    <property type="evidence" value="ECO:0007669"/>
    <property type="project" value="UniProtKB-UniRule"/>
</dbReference>
<dbReference type="GO" id="GO:0006420">
    <property type="term" value="P:arginyl-tRNA aminoacylation"/>
    <property type="evidence" value="ECO:0007669"/>
    <property type="project" value="UniProtKB-UniRule"/>
</dbReference>
<dbReference type="CDD" id="cd00671">
    <property type="entry name" value="ArgRS_core"/>
    <property type="match status" value="1"/>
</dbReference>
<dbReference type="Gene3D" id="3.30.1360.70">
    <property type="entry name" value="Arginyl tRNA synthetase N-terminal domain"/>
    <property type="match status" value="1"/>
</dbReference>
<dbReference type="Gene3D" id="3.40.50.620">
    <property type="entry name" value="HUPs"/>
    <property type="match status" value="1"/>
</dbReference>
<dbReference type="Gene3D" id="1.10.730.10">
    <property type="entry name" value="Isoleucyl-tRNA Synthetase, Domain 1"/>
    <property type="match status" value="1"/>
</dbReference>
<dbReference type="HAMAP" id="MF_00123">
    <property type="entry name" value="Arg_tRNA_synth"/>
    <property type="match status" value="1"/>
</dbReference>
<dbReference type="InterPro" id="IPR001412">
    <property type="entry name" value="aa-tRNA-synth_I_CS"/>
</dbReference>
<dbReference type="InterPro" id="IPR001278">
    <property type="entry name" value="Arg-tRNA-ligase"/>
</dbReference>
<dbReference type="InterPro" id="IPR005148">
    <property type="entry name" value="Arg-tRNA-synth_N"/>
</dbReference>
<dbReference type="InterPro" id="IPR036695">
    <property type="entry name" value="Arg-tRNA-synth_N_sf"/>
</dbReference>
<dbReference type="InterPro" id="IPR035684">
    <property type="entry name" value="ArgRS_core"/>
</dbReference>
<dbReference type="InterPro" id="IPR008909">
    <property type="entry name" value="DALR_anticod-bd"/>
</dbReference>
<dbReference type="InterPro" id="IPR014729">
    <property type="entry name" value="Rossmann-like_a/b/a_fold"/>
</dbReference>
<dbReference type="InterPro" id="IPR009080">
    <property type="entry name" value="tRNAsynth_Ia_anticodon-bd"/>
</dbReference>
<dbReference type="NCBIfam" id="TIGR00456">
    <property type="entry name" value="argS"/>
    <property type="match status" value="1"/>
</dbReference>
<dbReference type="PANTHER" id="PTHR11956:SF5">
    <property type="entry name" value="ARGININE--TRNA LIGASE, CYTOPLASMIC"/>
    <property type="match status" value="1"/>
</dbReference>
<dbReference type="PANTHER" id="PTHR11956">
    <property type="entry name" value="ARGINYL-TRNA SYNTHETASE"/>
    <property type="match status" value="1"/>
</dbReference>
<dbReference type="Pfam" id="PF03485">
    <property type="entry name" value="Arg_tRNA_synt_N"/>
    <property type="match status" value="1"/>
</dbReference>
<dbReference type="Pfam" id="PF05746">
    <property type="entry name" value="DALR_1"/>
    <property type="match status" value="1"/>
</dbReference>
<dbReference type="Pfam" id="PF00750">
    <property type="entry name" value="tRNA-synt_1d"/>
    <property type="match status" value="1"/>
</dbReference>
<dbReference type="PRINTS" id="PR01038">
    <property type="entry name" value="TRNASYNTHARG"/>
</dbReference>
<dbReference type="SMART" id="SM01016">
    <property type="entry name" value="Arg_tRNA_synt_N"/>
    <property type="match status" value="1"/>
</dbReference>
<dbReference type="SMART" id="SM00836">
    <property type="entry name" value="DALR_1"/>
    <property type="match status" value="1"/>
</dbReference>
<dbReference type="SUPFAM" id="SSF47323">
    <property type="entry name" value="Anticodon-binding domain of a subclass of class I aminoacyl-tRNA synthetases"/>
    <property type="match status" value="1"/>
</dbReference>
<dbReference type="SUPFAM" id="SSF55190">
    <property type="entry name" value="Arginyl-tRNA synthetase (ArgRS), N-terminal 'additional' domain"/>
    <property type="match status" value="1"/>
</dbReference>
<dbReference type="SUPFAM" id="SSF52374">
    <property type="entry name" value="Nucleotidylyl transferase"/>
    <property type="match status" value="1"/>
</dbReference>
<dbReference type="PROSITE" id="PS00178">
    <property type="entry name" value="AA_TRNA_LIGASE_I"/>
    <property type="match status" value="1"/>
</dbReference>
<accession>Q602D8</accession>
<protein>
    <recommendedName>
        <fullName evidence="1">Arginine--tRNA ligase</fullName>
        <ecNumber evidence="1">6.1.1.19</ecNumber>
    </recommendedName>
    <alternativeName>
        <fullName evidence="1">Arginyl-tRNA synthetase</fullName>
        <shortName evidence="1">ArgRS</shortName>
    </alternativeName>
</protein>
<organism>
    <name type="scientific">Mesomycoplasma hyopneumoniae (strain 232)</name>
    <name type="common">Mycoplasma hyopneumoniae</name>
    <dbReference type="NCBI Taxonomy" id="295358"/>
    <lineage>
        <taxon>Bacteria</taxon>
        <taxon>Bacillati</taxon>
        <taxon>Mycoplasmatota</taxon>
        <taxon>Mycoplasmoidales</taxon>
        <taxon>Metamycoplasmataceae</taxon>
        <taxon>Mesomycoplasma</taxon>
    </lineage>
</organism>
<comment type="catalytic activity">
    <reaction evidence="1">
        <text>tRNA(Arg) + L-arginine + ATP = L-arginyl-tRNA(Arg) + AMP + diphosphate</text>
        <dbReference type="Rhea" id="RHEA:20301"/>
        <dbReference type="Rhea" id="RHEA-COMP:9658"/>
        <dbReference type="Rhea" id="RHEA-COMP:9673"/>
        <dbReference type="ChEBI" id="CHEBI:30616"/>
        <dbReference type="ChEBI" id="CHEBI:32682"/>
        <dbReference type="ChEBI" id="CHEBI:33019"/>
        <dbReference type="ChEBI" id="CHEBI:78442"/>
        <dbReference type="ChEBI" id="CHEBI:78513"/>
        <dbReference type="ChEBI" id="CHEBI:456215"/>
        <dbReference type="EC" id="6.1.1.19"/>
    </reaction>
</comment>
<comment type="subunit">
    <text evidence="1">Monomer.</text>
</comment>
<comment type="subcellular location">
    <subcellularLocation>
        <location evidence="1">Cytoplasm</location>
    </subcellularLocation>
</comment>
<comment type="similarity">
    <text evidence="1">Belongs to the class-I aminoacyl-tRNA synthetase family.</text>
</comment>
<gene>
    <name evidence="1" type="primary">argS</name>
    <name type="ordered locus">mhp012</name>
</gene>
<name>SYR_MESH2</name>
<keyword id="KW-0030">Aminoacyl-tRNA synthetase</keyword>
<keyword id="KW-0067">ATP-binding</keyword>
<keyword id="KW-0963">Cytoplasm</keyword>
<keyword id="KW-0436">Ligase</keyword>
<keyword id="KW-0547">Nucleotide-binding</keyword>
<keyword id="KW-0648">Protein biosynthesis</keyword>
<sequence>MKKKISQAIIKFFKNENLIIDESKLIIEKSKNFGDYSSNVALIFAKQNKIDSLKLAQTIKNQLLSENLNLEKIEIAPPGFINFFISKNEYANIVSEIIQKGENFGRYSLQKKINLEFVSANPTGFLHLGHLRGAVIGDILANILEFSGNFVFREYYINDFGSQIDRLVGSVFSRYQQIFKKFPLPEEAYLGEDIIWCAQKFFQIYANKFENSSLDDLEAYKIFREKSIEIFLDEIKADLANLSIKFDVFSSESELFRTEKVQKNLANLPFVYKKEEAIWLKTSKFGDQKDRVLVKKNGEFTYFSSDIAYHFEKINSNFKPDFLINIWGADHIGYVDRMKAALKTVNLNQKLDILLYQLVKLFKNGQEFKMSKRMGKTFTIKDLLELVDQDAIRYFISERSYNSLVEFDIGLAAKISLQNPLFLIQYAHARASKLLANSTIAPEKKLKFEAENETILISKLKQFEEIVLKITKNYKINLLNKYLLELANLFNSFYSNSKIIGNQNQNSLLSLTKAVQIVLKNGLKLLGIKAKERI</sequence>